<feature type="chain" id="PRO_5000257148" description="PTS system glucoside-specific EIICBA component">
    <location>
        <begin position="1"/>
        <end position="688"/>
    </location>
</feature>
<feature type="transmembrane region" description="Helical" evidence="4">
    <location>
        <begin position="12"/>
        <end position="32"/>
    </location>
</feature>
<feature type="transmembrane region" description="Helical" evidence="4">
    <location>
        <begin position="81"/>
        <end position="101"/>
    </location>
</feature>
<feature type="transmembrane region" description="Helical" evidence="4">
    <location>
        <begin position="137"/>
        <end position="157"/>
    </location>
</feature>
<feature type="transmembrane region" description="Helical" evidence="4">
    <location>
        <begin position="182"/>
        <end position="202"/>
    </location>
</feature>
<feature type="transmembrane region" description="Helical" evidence="4">
    <location>
        <begin position="223"/>
        <end position="243"/>
    </location>
</feature>
<feature type="transmembrane region" description="Helical" evidence="4">
    <location>
        <begin position="284"/>
        <end position="304"/>
    </location>
</feature>
<feature type="transmembrane region" description="Helical" evidence="4">
    <location>
        <begin position="315"/>
        <end position="335"/>
    </location>
</feature>
<feature type="transmembrane region" description="Helical" evidence="4">
    <location>
        <begin position="340"/>
        <end position="360"/>
    </location>
</feature>
<feature type="transmembrane region" description="Helical" evidence="4">
    <location>
        <begin position="364"/>
        <end position="384"/>
    </location>
</feature>
<feature type="transmembrane region" description="Helical" evidence="4">
    <location>
        <begin position="395"/>
        <end position="415"/>
    </location>
</feature>
<feature type="domain" description="PTS EIIC type-1" evidence="4">
    <location>
        <begin position="3"/>
        <end position="427"/>
    </location>
</feature>
<feature type="domain" description="PTS EIIB type-1" evidence="3">
    <location>
        <begin position="438"/>
        <end position="519"/>
    </location>
</feature>
<feature type="domain" description="PTS EIIA type-1" evidence="2">
    <location>
        <begin position="560"/>
        <end position="664"/>
    </location>
</feature>
<feature type="active site" description="Phosphocysteine intermediate; for EIIB activity" evidence="3">
    <location>
        <position position="460"/>
    </location>
</feature>
<feature type="active site" description="Tele-phosphohistidine intermediate; for EIIA activity" evidence="2">
    <location>
        <position position="612"/>
    </location>
</feature>
<evidence type="ECO:0000250" key="1"/>
<evidence type="ECO:0000255" key="2">
    <source>
        <dbReference type="PROSITE-ProRule" id="PRU00416"/>
    </source>
</evidence>
<evidence type="ECO:0000255" key="3">
    <source>
        <dbReference type="PROSITE-ProRule" id="PRU00421"/>
    </source>
</evidence>
<evidence type="ECO:0000255" key="4">
    <source>
        <dbReference type="PROSITE-ProRule" id="PRU00426"/>
    </source>
</evidence>
<proteinExistence type="inferred from homology"/>
<accession>A6U4R9</accession>
<gene>
    <name type="primary">glcB</name>
    <name type="ordered locus">SaurJH1_2614</name>
</gene>
<dbReference type="EC" id="2.7.1.-"/>
<dbReference type="EMBL" id="CP000736">
    <property type="protein sequence ID" value="ABR53437.1"/>
    <property type="molecule type" value="Genomic_DNA"/>
</dbReference>
<dbReference type="SMR" id="A6U4R9"/>
<dbReference type="KEGG" id="sah:SaurJH1_2614"/>
<dbReference type="HOGENOM" id="CLU_012312_1_1_9"/>
<dbReference type="GO" id="GO:0005886">
    <property type="term" value="C:plasma membrane"/>
    <property type="evidence" value="ECO:0007669"/>
    <property type="project" value="UniProtKB-SubCell"/>
</dbReference>
<dbReference type="GO" id="GO:0055056">
    <property type="term" value="F:D-glucose transmembrane transporter activity"/>
    <property type="evidence" value="ECO:0007669"/>
    <property type="project" value="InterPro"/>
</dbReference>
<dbReference type="GO" id="GO:0016301">
    <property type="term" value="F:kinase activity"/>
    <property type="evidence" value="ECO:0007669"/>
    <property type="project" value="UniProtKB-KW"/>
</dbReference>
<dbReference type="GO" id="GO:0008982">
    <property type="term" value="F:protein-N(PI)-phosphohistidine-sugar phosphotransferase activity"/>
    <property type="evidence" value="ECO:0007669"/>
    <property type="project" value="InterPro"/>
</dbReference>
<dbReference type="GO" id="GO:0090563">
    <property type="term" value="F:protein-phosphocysteine-sugar phosphotransferase activity"/>
    <property type="evidence" value="ECO:0007669"/>
    <property type="project" value="TreeGrafter"/>
</dbReference>
<dbReference type="GO" id="GO:1904659">
    <property type="term" value="P:D-glucose transmembrane transport"/>
    <property type="evidence" value="ECO:0007669"/>
    <property type="project" value="InterPro"/>
</dbReference>
<dbReference type="GO" id="GO:0009401">
    <property type="term" value="P:phosphoenolpyruvate-dependent sugar phosphotransferase system"/>
    <property type="evidence" value="ECO:0007669"/>
    <property type="project" value="UniProtKB-KW"/>
</dbReference>
<dbReference type="CDD" id="cd00212">
    <property type="entry name" value="PTS_IIB_glc"/>
    <property type="match status" value="1"/>
</dbReference>
<dbReference type="FunFam" id="2.70.70.10:FF:000001">
    <property type="entry name" value="PTS system glucose-specific IIA component"/>
    <property type="match status" value="1"/>
</dbReference>
<dbReference type="FunFam" id="3.30.1360.60:FF:000001">
    <property type="entry name" value="PTS system glucose-specific IIBC component PtsG"/>
    <property type="match status" value="1"/>
</dbReference>
<dbReference type="Gene3D" id="2.70.70.10">
    <property type="entry name" value="Glucose Permease (Domain IIA)"/>
    <property type="match status" value="1"/>
</dbReference>
<dbReference type="Gene3D" id="3.30.1360.60">
    <property type="entry name" value="Glucose permease domain IIB"/>
    <property type="match status" value="1"/>
</dbReference>
<dbReference type="InterPro" id="IPR011055">
    <property type="entry name" value="Dup_hybrid_motif"/>
</dbReference>
<dbReference type="InterPro" id="IPR036878">
    <property type="entry name" value="Glu_permease_IIB"/>
</dbReference>
<dbReference type="InterPro" id="IPR018113">
    <property type="entry name" value="PTrfase_EIIB_Cys"/>
</dbReference>
<dbReference type="InterPro" id="IPR001127">
    <property type="entry name" value="PTS_EIIA_1_perm"/>
</dbReference>
<dbReference type="InterPro" id="IPR003352">
    <property type="entry name" value="PTS_EIIC"/>
</dbReference>
<dbReference type="InterPro" id="IPR013013">
    <property type="entry name" value="PTS_EIIC_1"/>
</dbReference>
<dbReference type="InterPro" id="IPR050429">
    <property type="entry name" value="PTS_Glucose_EIICBA"/>
</dbReference>
<dbReference type="InterPro" id="IPR001996">
    <property type="entry name" value="PTS_IIB_1"/>
</dbReference>
<dbReference type="InterPro" id="IPR011299">
    <property type="entry name" value="PTS_IIBC_glc"/>
</dbReference>
<dbReference type="NCBIfam" id="TIGR00826">
    <property type="entry name" value="EIIB_glc"/>
    <property type="match status" value="1"/>
</dbReference>
<dbReference type="NCBIfam" id="TIGR00830">
    <property type="entry name" value="PTBA"/>
    <property type="match status" value="1"/>
</dbReference>
<dbReference type="NCBIfam" id="TIGR02002">
    <property type="entry name" value="PTS-II-BC-glcB"/>
    <property type="match status" value="1"/>
</dbReference>
<dbReference type="PANTHER" id="PTHR30009">
    <property type="entry name" value="CYTOCHROME C-TYPE SYNTHESIS PROTEIN AND PTS TRANSMEMBRANE COMPONENT"/>
    <property type="match status" value="1"/>
</dbReference>
<dbReference type="PANTHER" id="PTHR30009:SF20">
    <property type="entry name" value="PTS SYSTEM GLUCOSE-SPECIFIC EIICB COMPONENT-RELATED"/>
    <property type="match status" value="1"/>
</dbReference>
<dbReference type="Pfam" id="PF00358">
    <property type="entry name" value="PTS_EIIA_1"/>
    <property type="match status" value="1"/>
</dbReference>
<dbReference type="Pfam" id="PF00367">
    <property type="entry name" value="PTS_EIIB"/>
    <property type="match status" value="1"/>
</dbReference>
<dbReference type="Pfam" id="PF02378">
    <property type="entry name" value="PTS_EIIC"/>
    <property type="match status" value="1"/>
</dbReference>
<dbReference type="SUPFAM" id="SSF51261">
    <property type="entry name" value="Duplicated hybrid motif"/>
    <property type="match status" value="1"/>
</dbReference>
<dbReference type="SUPFAM" id="SSF55604">
    <property type="entry name" value="Glucose permease domain IIB"/>
    <property type="match status" value="1"/>
</dbReference>
<dbReference type="PROSITE" id="PS51093">
    <property type="entry name" value="PTS_EIIA_TYPE_1"/>
    <property type="match status" value="1"/>
</dbReference>
<dbReference type="PROSITE" id="PS00371">
    <property type="entry name" value="PTS_EIIA_TYPE_1_HIS"/>
    <property type="match status" value="1"/>
</dbReference>
<dbReference type="PROSITE" id="PS51098">
    <property type="entry name" value="PTS_EIIB_TYPE_1"/>
    <property type="match status" value="1"/>
</dbReference>
<dbReference type="PROSITE" id="PS01035">
    <property type="entry name" value="PTS_EIIB_TYPE_1_CYS"/>
    <property type="match status" value="1"/>
</dbReference>
<dbReference type="PROSITE" id="PS51103">
    <property type="entry name" value="PTS_EIIC_TYPE_1"/>
    <property type="match status" value="1"/>
</dbReference>
<keyword id="KW-1003">Cell membrane</keyword>
<keyword id="KW-0418">Kinase</keyword>
<keyword id="KW-0472">Membrane</keyword>
<keyword id="KW-0598">Phosphotransferase system</keyword>
<keyword id="KW-0762">Sugar transport</keyword>
<keyword id="KW-0808">Transferase</keyword>
<keyword id="KW-0812">Transmembrane</keyword>
<keyword id="KW-1133">Transmembrane helix</keyword>
<keyword id="KW-0813">Transport</keyword>
<name>PTU3C_STAA2</name>
<reference key="1">
    <citation type="submission" date="2007-06" db="EMBL/GenBank/DDBJ databases">
        <title>Complete sequence of chromosome of Staphylococcus aureus subsp. aureus JH1.</title>
        <authorList>
            <consortium name="US DOE Joint Genome Institute"/>
            <person name="Copeland A."/>
            <person name="Lucas S."/>
            <person name="Lapidus A."/>
            <person name="Barry K."/>
            <person name="Detter J.C."/>
            <person name="Glavina del Rio T."/>
            <person name="Hammon N."/>
            <person name="Israni S."/>
            <person name="Dalin E."/>
            <person name="Tice H."/>
            <person name="Pitluck S."/>
            <person name="Chain P."/>
            <person name="Malfatti S."/>
            <person name="Shin M."/>
            <person name="Vergez L."/>
            <person name="Schmutz J."/>
            <person name="Larimer F."/>
            <person name="Land M."/>
            <person name="Hauser L."/>
            <person name="Kyrpides N."/>
            <person name="Ivanova N."/>
            <person name="Tomasz A."/>
            <person name="Richardson P."/>
        </authorList>
    </citation>
    <scope>NUCLEOTIDE SEQUENCE [LARGE SCALE GENOMIC DNA]</scope>
    <source>
        <strain>JH1</strain>
    </source>
</reference>
<protein>
    <recommendedName>
        <fullName>PTS system glucoside-specific EIICBA component</fullName>
    </recommendedName>
    <domain>
        <recommendedName>
            <fullName>Glucoside permease IIC component</fullName>
        </recommendedName>
        <alternativeName>
            <fullName>PTS system glucoside-specific EIIC component</fullName>
        </alternativeName>
    </domain>
    <domain>
        <recommendedName>
            <fullName>Glucoside-specific phosphotransferase enzyme IIB component</fullName>
            <ecNumber>2.7.1.-</ecNumber>
        </recommendedName>
        <alternativeName>
            <fullName>PTS system glucoside-specific EIIB component</fullName>
        </alternativeName>
    </domain>
    <domain>
        <recommendedName>
            <fullName>Glucoside-specific phosphotransferase enzyme IIA component</fullName>
        </recommendedName>
        <alternativeName>
            <fullName>PTS system glucoside-specific EIIA component</fullName>
        </alternativeName>
    </domain>
</protein>
<organism>
    <name type="scientific">Staphylococcus aureus (strain JH1)</name>
    <dbReference type="NCBI Taxonomy" id="359787"/>
    <lineage>
        <taxon>Bacteria</taxon>
        <taxon>Bacillati</taxon>
        <taxon>Bacillota</taxon>
        <taxon>Bacilli</taxon>
        <taxon>Bacillales</taxon>
        <taxon>Staphylococcaceae</taxon>
        <taxon>Staphylococcus</taxon>
    </lineage>
</organism>
<sequence length="688" mass="74416">MFKKLFGQLQRIGKALMLPVAILPAAGILLAFGNAMHNEQLVEIAPWLKNDIIVMISSVMEAAGQVVFDNLPLLFAVGTALGLAGGDGVAALAALVGYLIMNATMGKVLHITIDDIFSYAKGAKELSQAAKEPAHALVLGIPTLQTGVFGGIIMGALAAWCYNKFYNITLPPFLGFFAGKRFVPIVTSVVAIATGVLLSFAWPPIQDGLNSLSNFLLNKNLTLTTFIFGIIERSLIPFGLHHIFYSPFWFEFGSYTNHAGELVRGDQRIWMAQLKDGVPFTAGAFTTGKYPFMMFGLPAAAFAIYKNARPERKKVVGGLMLSAGLTAFLTGITEPLEFSFLFVAPVLYGIHVLLAGTSFLVMHLLGVKIGMTFSGGFIDYILYGLLNWDRSHALLVIPVGIVYAIVYYFLFDFAIRKFKLKTPGREDEETEIRNSSVAKLPFDVLDAMGGKENIKHLDACITRLRVEVVDKSKVDVAGIKALGASGVLEVGNNMQAIFGPKSDQIKHDMAKIMSGEITKPSETTVTEEMSDEPVHVEALGTTDIYAPGVGQIIPLSEVPDQVFAGKMMGDGIGFIPEKGEIVAPFDGTVKTIFPTKHAIGLESESGVEVLIHIGIDTVKLNGEGFESLINVDEKVTQGQPLMKVNLAYLKAHAPSIVTPMIITNLENKELVIEDVQDADPGKLIMTVK</sequence>
<comment type="function">
    <text evidence="1">The phosphoenolpyruvate-dependent sugar phosphotransferase system (sugar PTS), a major carbohydrate active -transport system, catalyzes the phosphorylation of incoming sugar substrates concomitantly with their translocation across the cell membrane. This system is involved in alpha- and beta-glucoside transport (By similarity).</text>
</comment>
<comment type="subcellular location">
    <subcellularLocation>
        <location evidence="4">Cell membrane</location>
        <topology evidence="4">Multi-pass membrane protein</topology>
    </subcellularLocation>
</comment>
<comment type="domain">
    <text>The EIIC domain forms the PTS system translocation channel and contains the specific substrate-binding site.</text>
</comment>
<comment type="domain">
    <text>The EIIB domain is phosphorylated by phospho-EIIA on a cysteinyl or histidyl residue, depending on the transported sugar. Then, it transfers the phosphoryl group to the sugar substrate concomitantly with the sugar uptake processed by the EIIC domain.</text>
</comment>
<comment type="domain">
    <text>The EIIA domain is phosphorylated by phospho-HPr on a histidyl residue. Then, it transfers the phosphoryl group to the EIIB domain.</text>
</comment>